<name>ARGC_PICP2</name>
<organism>
    <name type="scientific">Picosynechococcus sp. (strain ATCC 27264 / PCC 7002 / PR-6)</name>
    <name type="common">Agmenellum quadruplicatum</name>
    <dbReference type="NCBI Taxonomy" id="32049"/>
    <lineage>
        <taxon>Bacteria</taxon>
        <taxon>Bacillati</taxon>
        <taxon>Cyanobacteriota</taxon>
        <taxon>Cyanophyceae</taxon>
        <taxon>Oscillatoriophycideae</taxon>
        <taxon>Chroococcales</taxon>
        <taxon>Geminocystaceae</taxon>
        <taxon>Picosynechococcus</taxon>
    </lineage>
</organism>
<feature type="chain" id="PRO_1000096741" description="N-acetyl-gamma-glutamyl-phosphate reductase">
    <location>
        <begin position="1"/>
        <end position="352"/>
    </location>
</feature>
<feature type="active site" evidence="1">
    <location>
        <position position="155"/>
    </location>
</feature>
<accession>B1XIA1</accession>
<keyword id="KW-0028">Amino-acid biosynthesis</keyword>
<keyword id="KW-0055">Arginine biosynthesis</keyword>
<keyword id="KW-0963">Cytoplasm</keyword>
<keyword id="KW-0521">NADP</keyword>
<keyword id="KW-0560">Oxidoreductase</keyword>
<keyword id="KW-1185">Reference proteome</keyword>
<reference key="1">
    <citation type="submission" date="2008-02" db="EMBL/GenBank/DDBJ databases">
        <title>Complete sequence of Synechococcus sp. PCC 7002.</title>
        <authorList>
            <person name="Li T."/>
            <person name="Zhao J."/>
            <person name="Zhao C."/>
            <person name="Liu Z."/>
            <person name="Zhao F."/>
            <person name="Marquardt J."/>
            <person name="Nomura C.T."/>
            <person name="Persson S."/>
            <person name="Detter J.C."/>
            <person name="Richardson P.M."/>
            <person name="Lanz C."/>
            <person name="Schuster S.C."/>
            <person name="Wang J."/>
            <person name="Li S."/>
            <person name="Huang X."/>
            <person name="Cai T."/>
            <person name="Yu Z."/>
            <person name="Luo J."/>
            <person name="Zhao J."/>
            <person name="Bryant D.A."/>
        </authorList>
    </citation>
    <scope>NUCLEOTIDE SEQUENCE [LARGE SCALE GENOMIC DNA]</scope>
    <source>
        <strain>ATCC 27264 / PCC 7002 / PR-6</strain>
    </source>
</reference>
<gene>
    <name evidence="1" type="primary">argC</name>
    <name type="ordered locus">SYNPCC7002_A2102</name>
</gene>
<evidence type="ECO:0000255" key="1">
    <source>
        <dbReference type="HAMAP-Rule" id="MF_00150"/>
    </source>
</evidence>
<protein>
    <recommendedName>
        <fullName evidence="1">N-acetyl-gamma-glutamyl-phosphate reductase</fullName>
        <shortName evidence="1">AGPR</shortName>
        <ecNumber evidence="1">1.2.1.38</ecNumber>
    </recommendedName>
    <alternativeName>
        <fullName evidence="1">N-acetyl-glutamate semialdehyde dehydrogenase</fullName>
        <shortName evidence="1">NAGSA dehydrogenase</shortName>
    </alternativeName>
</protein>
<proteinExistence type="inferred from homology"/>
<comment type="function">
    <text evidence="1">Catalyzes the NADPH-dependent reduction of N-acetyl-5-glutamyl phosphate to yield N-acetyl-L-glutamate 5-semialdehyde.</text>
</comment>
<comment type="catalytic activity">
    <reaction evidence="1">
        <text>N-acetyl-L-glutamate 5-semialdehyde + phosphate + NADP(+) = N-acetyl-L-glutamyl 5-phosphate + NADPH + H(+)</text>
        <dbReference type="Rhea" id="RHEA:21588"/>
        <dbReference type="ChEBI" id="CHEBI:15378"/>
        <dbReference type="ChEBI" id="CHEBI:29123"/>
        <dbReference type="ChEBI" id="CHEBI:43474"/>
        <dbReference type="ChEBI" id="CHEBI:57783"/>
        <dbReference type="ChEBI" id="CHEBI:57936"/>
        <dbReference type="ChEBI" id="CHEBI:58349"/>
        <dbReference type="EC" id="1.2.1.38"/>
    </reaction>
</comment>
<comment type="pathway">
    <text evidence="1">Amino-acid biosynthesis; L-arginine biosynthesis; N(2)-acetyl-L-ornithine from L-glutamate: step 3/4.</text>
</comment>
<comment type="subcellular location">
    <subcellularLocation>
        <location evidence="1">Cytoplasm</location>
    </subcellularLocation>
</comment>
<comment type="similarity">
    <text evidence="1">Belongs to the NAGSA dehydrogenase family. Type 1 subfamily.</text>
</comment>
<dbReference type="EC" id="1.2.1.38" evidence="1"/>
<dbReference type="EMBL" id="CP000951">
    <property type="protein sequence ID" value="ACB00086.1"/>
    <property type="molecule type" value="Genomic_DNA"/>
</dbReference>
<dbReference type="RefSeq" id="WP_012307707.1">
    <property type="nucleotide sequence ID" value="NZ_JAHHPU010000002.1"/>
</dbReference>
<dbReference type="SMR" id="B1XIA1"/>
<dbReference type="STRING" id="32049.SYNPCC7002_A2102"/>
<dbReference type="KEGG" id="syp:SYNPCC7002_A2102"/>
<dbReference type="eggNOG" id="COG0002">
    <property type="taxonomic scope" value="Bacteria"/>
</dbReference>
<dbReference type="HOGENOM" id="CLU_006384_0_1_3"/>
<dbReference type="UniPathway" id="UPA00068">
    <property type="reaction ID" value="UER00108"/>
</dbReference>
<dbReference type="Proteomes" id="UP000001688">
    <property type="component" value="Chromosome"/>
</dbReference>
<dbReference type="GO" id="GO:0005737">
    <property type="term" value="C:cytoplasm"/>
    <property type="evidence" value="ECO:0007669"/>
    <property type="project" value="UniProtKB-SubCell"/>
</dbReference>
<dbReference type="GO" id="GO:0003942">
    <property type="term" value="F:N-acetyl-gamma-glutamyl-phosphate reductase activity"/>
    <property type="evidence" value="ECO:0007669"/>
    <property type="project" value="UniProtKB-UniRule"/>
</dbReference>
<dbReference type="GO" id="GO:0051287">
    <property type="term" value="F:NAD binding"/>
    <property type="evidence" value="ECO:0007669"/>
    <property type="project" value="InterPro"/>
</dbReference>
<dbReference type="GO" id="GO:0070401">
    <property type="term" value="F:NADP+ binding"/>
    <property type="evidence" value="ECO:0007669"/>
    <property type="project" value="InterPro"/>
</dbReference>
<dbReference type="GO" id="GO:0006526">
    <property type="term" value="P:L-arginine biosynthetic process"/>
    <property type="evidence" value="ECO:0007669"/>
    <property type="project" value="UniProtKB-UniRule"/>
</dbReference>
<dbReference type="CDD" id="cd23934">
    <property type="entry name" value="AGPR_1_C"/>
    <property type="match status" value="1"/>
</dbReference>
<dbReference type="CDD" id="cd17895">
    <property type="entry name" value="AGPR_1_N"/>
    <property type="match status" value="1"/>
</dbReference>
<dbReference type="FunFam" id="3.30.360.10:FF:000014">
    <property type="entry name" value="N-acetyl-gamma-glutamyl-phosphate reductase"/>
    <property type="match status" value="1"/>
</dbReference>
<dbReference type="Gene3D" id="3.30.360.10">
    <property type="entry name" value="Dihydrodipicolinate Reductase, domain 2"/>
    <property type="match status" value="1"/>
</dbReference>
<dbReference type="Gene3D" id="3.40.50.720">
    <property type="entry name" value="NAD(P)-binding Rossmann-like Domain"/>
    <property type="match status" value="1"/>
</dbReference>
<dbReference type="HAMAP" id="MF_00150">
    <property type="entry name" value="ArgC_type1"/>
    <property type="match status" value="1"/>
</dbReference>
<dbReference type="InterPro" id="IPR023013">
    <property type="entry name" value="AGPR_AS"/>
</dbReference>
<dbReference type="InterPro" id="IPR000706">
    <property type="entry name" value="AGPR_type-1"/>
</dbReference>
<dbReference type="InterPro" id="IPR036291">
    <property type="entry name" value="NAD(P)-bd_dom_sf"/>
</dbReference>
<dbReference type="InterPro" id="IPR050085">
    <property type="entry name" value="NAGSA_dehydrogenase"/>
</dbReference>
<dbReference type="InterPro" id="IPR000534">
    <property type="entry name" value="Semialdehyde_DH_NAD-bd"/>
</dbReference>
<dbReference type="NCBIfam" id="TIGR01850">
    <property type="entry name" value="argC"/>
    <property type="match status" value="1"/>
</dbReference>
<dbReference type="PANTHER" id="PTHR32338:SF10">
    <property type="entry name" value="N-ACETYL-GAMMA-GLUTAMYL-PHOSPHATE REDUCTASE, CHLOROPLASTIC-RELATED"/>
    <property type="match status" value="1"/>
</dbReference>
<dbReference type="PANTHER" id="PTHR32338">
    <property type="entry name" value="N-ACETYL-GAMMA-GLUTAMYL-PHOSPHATE REDUCTASE, CHLOROPLASTIC-RELATED-RELATED"/>
    <property type="match status" value="1"/>
</dbReference>
<dbReference type="Pfam" id="PF01118">
    <property type="entry name" value="Semialdhyde_dh"/>
    <property type="match status" value="1"/>
</dbReference>
<dbReference type="Pfam" id="PF22698">
    <property type="entry name" value="Semialdhyde_dhC_1"/>
    <property type="match status" value="1"/>
</dbReference>
<dbReference type="SMART" id="SM00859">
    <property type="entry name" value="Semialdhyde_dh"/>
    <property type="match status" value="1"/>
</dbReference>
<dbReference type="SUPFAM" id="SSF55347">
    <property type="entry name" value="Glyceraldehyde-3-phosphate dehydrogenase-like, C-terminal domain"/>
    <property type="match status" value="1"/>
</dbReference>
<dbReference type="SUPFAM" id="SSF51735">
    <property type="entry name" value="NAD(P)-binding Rossmann-fold domains"/>
    <property type="match status" value="1"/>
</dbReference>
<dbReference type="PROSITE" id="PS01224">
    <property type="entry name" value="ARGC"/>
    <property type="match status" value="1"/>
</dbReference>
<sequence>MSSSEKVSVGIVGASGYGGMQLVRLLSDHPQVELTYLGGNSSAGKPYAELYPHVGHRIKMIVEPIDLDVIASRCQVVFLGLPNGLACDLAPQLIERGCKVLDLSADYRFKDLDTYQAWYKTERTDQDTNAIAVYGLPELYRDDIRRAQLVGCPGCYVTASLLALAPLFKQGLIQPETAIIDAKSGTSGGGRQGKINLLLAEADASLGAYGVASHRHTPEIEQICSKLASQDIRVQFTPHLIPMPRGILATVYATLRDPGLVRDDLLTIYSAFYRAAPCVEVLPNGVYPQTKWACGTNLCYLGIEVDHRTGRVIVMSAIDNLLKGQSGQAVQCMNIMLGWEETAGLPQLAFYP</sequence>